<keyword id="KW-0472">Membrane</keyword>
<keyword id="KW-1185">Reference proteome</keyword>
<keyword id="KW-0926">Vacuole</keyword>
<sequence length="1804" mass="207409">MFSALRSKNQSNKRSNDDSINSRKDVNELSLGAGGTSTSTNTNHNDSPSIKNKNKNKNKNKTENENIYKLTISSGRSRGTASNTTNANTLVLNAGVAIVGKAPIASSQNEIQTISGQSLQSGIDTNLMTAGFGRSAGIDSTTTVSHDANSVKSRLQRLPTITTSYKEINNGNKPVQVEPQDDSHYTSSLLVDTDPRSNNQPQSISSNAVANVEINRTLQLDLVYHESRVSEKLVMLDLKKLPHIKEGQLCELRTYRKRKSTSARSNKNSRDKKLYFIAHDFDEETRKRCHKFGNISVALGQLQLLLDLPPRSRVWIKPKRKEDTAADLIELHIKDILVNRGDMWCMSSELVDTCVFTGQRIMFLDSIRTTVNGIYKNGKKVLSGYINDNTKIVFRSESSRLLFIIQITNEMWSFDESGEQMFQKMINSFFPKIFNKWKDIETHHSITIAFAISMDMSTSSYKDLKPGQRIKNTTDYYRIVVDQVSVIYWVEIMESLRKEFMEITRELLSRKSDDKKDNELSVIKGRFAPVIKSNILELINFAATTIVDPFRQLDLRHTSTHVMIISPGKGLYDVDYDLLQLSCKKLLSLELTMDLICLSNPPLHVVPLFRYIDYENKLHHCIPPWLNIFFWNDKTKDTNKWTPRCQIYDLQMMGLTDTELVQELELDYLNPSDDINDLQTFLKDYDRDIFLPISTANFKAENISSDPDEEDLKELKKINDKTTTIHKSSTSRNTLTKSQRTNSEENNSIRSRKGDTIIKDPQFVGKISNSSRNNPPYDLSDKSTFEKQFKPKTTFHPSAMIKKTPENMKKLTNPVFQQQYFDIQTDNGLTGNSKNLLIKNTKYLTPIIDEPQTPLVTGNLYRTRFESQSNDNELNENSKLPERGGGTDERRNVSAADTLKDVTKKSSIKDFTQRIFTKFLATTKQSNFNSDGINSSAITEDAVLISDDTDGKTNNNNDFAVYPSSVADGDVSGDNQHRLNNKDSFTSILKPIPRPQLGVKIFKSDINNLSSNENVNSETKQNLLGTRNTINRKQFTASPHFTSSTKNSVSNHSRFIKFDSMDDWIEILEDSIPSYSFLGDDLLPTRWRDVWPKNVFRKYSKWKSFTSPAELPITLKRFPSKYELENNFMLRNHSVTQNWEQEQYKLTTKDLLRNMIYLRLLVGFQICTSSTIEEVESARKGDRDVFAIHKYLRGDLTGTFKIYMLMGSEIHRLHYDNSGTINVERYIEKSERNVFDQVPSYTSFVKTRYDSNYRKTDVDPIHTKRSEFNWNLLDQLLAGYSDPYLYDEWHGFRSKYVILPAEIPSNTFSMVVNGKNETLTTEEIRVEGLRKLIASITRLKLLSVEESKIQKDRKTEIQPEVIFYTGSLFDFLNEQQAQLDSSTLNFKDSIFGDVTKKLNKNIDLKNLAQELQMGENKLNLVTRKWHWKRHANCFVGSEMVNWLIRNFSDIDTRSTAISYGQKLMNDGLFIHVLDKHSFLDGNYFYQISPEFIINMNTVERTNSKNSNTSDNNTLKKTTSRNSTESNLTPLSMRNKVSTMDDDSTQLANTTSANSYKEKKTVVLSNSMLINVDPSSKSYKEELCTVHFDRVHNPEHCFHIRLEWLTTTPKLIDNMLGNWARICEKYGLKLIEIPWNELCTIPSVDPFHTFVQLHLVINPWEDPEFNDPELFAVSKFYYHIHLLKMSGFLLDNRASRFFQRDDADFEIMYSWGKPQFKYAQYIHTTGAYIAEMRENGNIFLAPNNVYMSRVNRANVISKTRSSPTFTVDSRKVVIEFSRTCYSYAKLRAVFLDAKEKWLSNKTVED</sequence>
<comment type="subcellular location">
    <subcellularLocation>
        <location evidence="1">Vacuole membrane</location>
        <topology evidence="1">Peripheral membrane protein</topology>
    </subcellularLocation>
</comment>
<comment type="similarity">
    <text evidence="4">Belongs to the IML1 family.</text>
</comment>
<evidence type="ECO:0000250" key="1"/>
<evidence type="ECO:0000255" key="2">
    <source>
        <dbReference type="PROSITE-ProRule" id="PRU00066"/>
    </source>
</evidence>
<evidence type="ECO:0000256" key="3">
    <source>
        <dbReference type="SAM" id="MobiDB-lite"/>
    </source>
</evidence>
<evidence type="ECO:0000305" key="4"/>
<dbReference type="EMBL" id="CR380959">
    <property type="protein sequence ID" value="CAG62336.1"/>
    <property type="molecule type" value="Genomic_DNA"/>
</dbReference>
<dbReference type="RefSeq" id="XP_449360.1">
    <property type="nucleotide sequence ID" value="XM_449360.1"/>
</dbReference>
<dbReference type="SMR" id="Q6FK84"/>
<dbReference type="FunCoup" id="Q6FK84">
    <property type="interactions" value="746"/>
</dbReference>
<dbReference type="STRING" id="284593.Q6FK84"/>
<dbReference type="EnsemblFungi" id="CAGL0M00352g-T">
    <property type="protein sequence ID" value="CAGL0M00352g-T-p1"/>
    <property type="gene ID" value="CAGL0M00352g"/>
</dbReference>
<dbReference type="KEGG" id="cgr:2891143"/>
<dbReference type="CGD" id="CAL0137411">
    <property type="gene designation" value="CAGL0M00352g"/>
</dbReference>
<dbReference type="VEuPathDB" id="FungiDB:CAGL0M00352g"/>
<dbReference type="eggNOG" id="KOG3572">
    <property type="taxonomic scope" value="Eukaryota"/>
</dbReference>
<dbReference type="HOGENOM" id="CLU_000935_1_1_1"/>
<dbReference type="InParanoid" id="Q6FK84"/>
<dbReference type="OMA" id="SWMNATP"/>
<dbReference type="Proteomes" id="UP000002428">
    <property type="component" value="Chromosome M"/>
</dbReference>
<dbReference type="GO" id="GO:1990130">
    <property type="term" value="C:GATOR1 complex"/>
    <property type="evidence" value="ECO:0007669"/>
    <property type="project" value="EnsemblFungi"/>
</dbReference>
<dbReference type="GO" id="GO:0005774">
    <property type="term" value="C:vacuolar membrane"/>
    <property type="evidence" value="ECO:0007669"/>
    <property type="project" value="UniProtKB-SubCell"/>
</dbReference>
<dbReference type="GO" id="GO:0005096">
    <property type="term" value="F:GTPase activator activity"/>
    <property type="evidence" value="ECO:0007669"/>
    <property type="project" value="EnsemblFungi"/>
</dbReference>
<dbReference type="GO" id="GO:0006995">
    <property type="term" value="P:cellular response to nitrogen starvation"/>
    <property type="evidence" value="ECO:0007669"/>
    <property type="project" value="EnsemblFungi"/>
</dbReference>
<dbReference type="GO" id="GO:0034599">
    <property type="term" value="P:cellular response to oxidative stress"/>
    <property type="evidence" value="ECO:0007669"/>
    <property type="project" value="EnsemblFungi"/>
</dbReference>
<dbReference type="GO" id="GO:0035556">
    <property type="term" value="P:intracellular signal transduction"/>
    <property type="evidence" value="ECO:0007669"/>
    <property type="project" value="InterPro"/>
</dbReference>
<dbReference type="GO" id="GO:0051058">
    <property type="term" value="P:negative regulation of small GTPase mediated signal transduction"/>
    <property type="evidence" value="ECO:0007669"/>
    <property type="project" value="EnsemblFungi"/>
</dbReference>
<dbReference type="GO" id="GO:1904262">
    <property type="term" value="P:negative regulation of TORC1 signaling"/>
    <property type="evidence" value="ECO:0007669"/>
    <property type="project" value="EnsemblFungi"/>
</dbReference>
<dbReference type="GO" id="GO:0010508">
    <property type="term" value="P:positive regulation of autophagy"/>
    <property type="evidence" value="ECO:0007669"/>
    <property type="project" value="EnsemblFungi"/>
</dbReference>
<dbReference type="GO" id="GO:2000785">
    <property type="term" value="P:regulation of autophagosome assembly"/>
    <property type="evidence" value="ECO:0007669"/>
    <property type="project" value="EnsemblFungi"/>
</dbReference>
<dbReference type="CDD" id="cd04449">
    <property type="entry name" value="DEP_DEPDC5-like"/>
    <property type="match status" value="1"/>
</dbReference>
<dbReference type="Gene3D" id="1.10.10.10">
    <property type="entry name" value="Winged helix-like DNA-binding domain superfamily/Winged helix DNA-binding domain"/>
    <property type="match status" value="1"/>
</dbReference>
<dbReference type="InterPro" id="IPR000591">
    <property type="entry name" value="DEP_dom"/>
</dbReference>
<dbReference type="InterPro" id="IPR045838">
    <property type="entry name" value="DEPDC5_CTD"/>
</dbReference>
<dbReference type="InterPro" id="IPR027244">
    <property type="entry name" value="IML1"/>
</dbReference>
<dbReference type="InterPro" id="IPR048255">
    <property type="entry name" value="IML1_N"/>
</dbReference>
<dbReference type="InterPro" id="IPR036388">
    <property type="entry name" value="WH-like_DNA-bd_sf"/>
</dbReference>
<dbReference type="InterPro" id="IPR036390">
    <property type="entry name" value="WH_DNA-bd_sf"/>
</dbReference>
<dbReference type="PANTHER" id="PTHR13179">
    <property type="entry name" value="DEP DOMAIN CONTAINING PROTEIN 5"/>
    <property type="match status" value="1"/>
</dbReference>
<dbReference type="PANTHER" id="PTHR13179:SF8">
    <property type="entry name" value="GATOR COMPLEX PROTEIN DEPDC5"/>
    <property type="match status" value="1"/>
</dbReference>
<dbReference type="Pfam" id="PF00610">
    <property type="entry name" value="DEP"/>
    <property type="match status" value="1"/>
</dbReference>
<dbReference type="Pfam" id="PF19418">
    <property type="entry name" value="DEPDC5_CTD"/>
    <property type="match status" value="1"/>
</dbReference>
<dbReference type="Pfam" id="PF12257">
    <property type="entry name" value="IML1"/>
    <property type="match status" value="1"/>
</dbReference>
<dbReference type="SMART" id="SM00049">
    <property type="entry name" value="DEP"/>
    <property type="match status" value="1"/>
</dbReference>
<dbReference type="SUPFAM" id="SSF46785">
    <property type="entry name" value="Winged helix' DNA-binding domain"/>
    <property type="match status" value="1"/>
</dbReference>
<dbReference type="PROSITE" id="PS50186">
    <property type="entry name" value="DEP"/>
    <property type="match status" value="1"/>
</dbReference>
<organism>
    <name type="scientific">Candida glabrata (strain ATCC 2001 / BCRC 20586 / JCM 3761 / NBRC 0622 / NRRL Y-65 / CBS 138)</name>
    <name type="common">Yeast</name>
    <name type="synonym">Nakaseomyces glabratus</name>
    <dbReference type="NCBI Taxonomy" id="284593"/>
    <lineage>
        <taxon>Eukaryota</taxon>
        <taxon>Fungi</taxon>
        <taxon>Dikarya</taxon>
        <taxon>Ascomycota</taxon>
        <taxon>Saccharomycotina</taxon>
        <taxon>Saccharomycetes</taxon>
        <taxon>Saccharomycetales</taxon>
        <taxon>Saccharomycetaceae</taxon>
        <taxon>Nakaseomyces</taxon>
    </lineage>
</organism>
<reference key="1">
    <citation type="journal article" date="2004" name="Nature">
        <title>Genome evolution in yeasts.</title>
        <authorList>
            <person name="Dujon B."/>
            <person name="Sherman D."/>
            <person name="Fischer G."/>
            <person name="Durrens P."/>
            <person name="Casaregola S."/>
            <person name="Lafontaine I."/>
            <person name="de Montigny J."/>
            <person name="Marck C."/>
            <person name="Neuveglise C."/>
            <person name="Talla E."/>
            <person name="Goffard N."/>
            <person name="Frangeul L."/>
            <person name="Aigle M."/>
            <person name="Anthouard V."/>
            <person name="Babour A."/>
            <person name="Barbe V."/>
            <person name="Barnay S."/>
            <person name="Blanchin S."/>
            <person name="Beckerich J.-M."/>
            <person name="Beyne E."/>
            <person name="Bleykasten C."/>
            <person name="Boisrame A."/>
            <person name="Boyer J."/>
            <person name="Cattolico L."/>
            <person name="Confanioleri F."/>
            <person name="de Daruvar A."/>
            <person name="Despons L."/>
            <person name="Fabre E."/>
            <person name="Fairhead C."/>
            <person name="Ferry-Dumazet H."/>
            <person name="Groppi A."/>
            <person name="Hantraye F."/>
            <person name="Hennequin C."/>
            <person name="Jauniaux N."/>
            <person name="Joyet P."/>
            <person name="Kachouri R."/>
            <person name="Kerrest A."/>
            <person name="Koszul R."/>
            <person name="Lemaire M."/>
            <person name="Lesur I."/>
            <person name="Ma L."/>
            <person name="Muller H."/>
            <person name="Nicaud J.-M."/>
            <person name="Nikolski M."/>
            <person name="Oztas S."/>
            <person name="Ozier-Kalogeropoulos O."/>
            <person name="Pellenz S."/>
            <person name="Potier S."/>
            <person name="Richard G.-F."/>
            <person name="Straub M.-L."/>
            <person name="Suleau A."/>
            <person name="Swennen D."/>
            <person name="Tekaia F."/>
            <person name="Wesolowski-Louvel M."/>
            <person name="Westhof E."/>
            <person name="Wirth B."/>
            <person name="Zeniou-Meyer M."/>
            <person name="Zivanovic Y."/>
            <person name="Bolotin-Fukuhara M."/>
            <person name="Thierry A."/>
            <person name="Bouchier C."/>
            <person name="Caudron B."/>
            <person name="Scarpelli C."/>
            <person name="Gaillardin C."/>
            <person name="Weissenbach J."/>
            <person name="Wincker P."/>
            <person name="Souciet J.-L."/>
        </authorList>
    </citation>
    <scope>NUCLEOTIDE SEQUENCE [LARGE SCALE GENOMIC DNA]</scope>
    <source>
        <strain>ATCC 2001 / BCRC 20586 / JCM 3761 / NBRC 0622 / NRRL Y-65 / CBS 138</strain>
    </source>
</reference>
<accession>Q6FK84</accession>
<gene>
    <name type="primary">IML1</name>
    <name type="ordered locus">CAGL0M00352g</name>
</gene>
<name>IML1_CANGA</name>
<proteinExistence type="inferred from homology"/>
<feature type="chain" id="PRO_0000301767" description="Vacuolar membrane-associated protein IML1">
    <location>
        <begin position="1"/>
        <end position="1804"/>
    </location>
</feature>
<feature type="domain" description="DEP" evidence="2">
    <location>
        <begin position="1414"/>
        <end position="1489"/>
    </location>
</feature>
<feature type="region of interest" description="Disordered" evidence="3">
    <location>
        <begin position="1"/>
        <end position="65"/>
    </location>
</feature>
<feature type="region of interest" description="Disordered" evidence="3">
    <location>
        <begin position="169"/>
        <end position="204"/>
    </location>
</feature>
<feature type="region of interest" description="Disordered" evidence="3">
    <location>
        <begin position="723"/>
        <end position="797"/>
    </location>
</feature>
<feature type="region of interest" description="Disordered" evidence="3">
    <location>
        <begin position="866"/>
        <end position="892"/>
    </location>
</feature>
<feature type="region of interest" description="Disordered" evidence="3">
    <location>
        <begin position="1501"/>
        <end position="1528"/>
    </location>
</feature>
<feature type="compositionally biased region" description="Polar residues" evidence="3">
    <location>
        <begin position="1"/>
        <end position="13"/>
    </location>
</feature>
<feature type="compositionally biased region" description="Basic and acidic residues" evidence="3">
    <location>
        <begin position="14"/>
        <end position="27"/>
    </location>
</feature>
<feature type="compositionally biased region" description="Polar residues" evidence="3">
    <location>
        <begin position="185"/>
        <end position="204"/>
    </location>
</feature>
<feature type="compositionally biased region" description="Polar residues" evidence="3">
    <location>
        <begin position="723"/>
        <end position="749"/>
    </location>
</feature>
<feature type="compositionally biased region" description="Basic and acidic residues" evidence="3">
    <location>
        <begin position="779"/>
        <end position="789"/>
    </location>
</feature>
<feature type="compositionally biased region" description="Polar residues" evidence="3">
    <location>
        <begin position="866"/>
        <end position="878"/>
    </location>
</feature>
<feature type="compositionally biased region" description="Basic and acidic residues" evidence="3">
    <location>
        <begin position="879"/>
        <end position="892"/>
    </location>
</feature>
<feature type="compositionally biased region" description="Low complexity" evidence="3">
    <location>
        <begin position="1503"/>
        <end position="1516"/>
    </location>
</feature>
<protein>
    <recommendedName>
        <fullName>Vacuolar membrane-associated protein IML1</fullName>
    </recommendedName>
</protein>